<organism>
    <name type="scientific">Geobacter sulfurreducens (strain ATCC 51573 / DSM 12127 / PCA)</name>
    <dbReference type="NCBI Taxonomy" id="243231"/>
    <lineage>
        <taxon>Bacteria</taxon>
        <taxon>Pseudomonadati</taxon>
        <taxon>Thermodesulfobacteriota</taxon>
        <taxon>Desulfuromonadia</taxon>
        <taxon>Geobacterales</taxon>
        <taxon>Geobacteraceae</taxon>
        <taxon>Geobacter</taxon>
    </lineage>
</organism>
<comment type="function">
    <text evidence="1">Involved in peptide bond synthesis. Stimulates efficient translation and peptide-bond synthesis on native or reconstituted 70S ribosomes in vitro. Probably functions indirectly by altering the affinity of the ribosome for aminoacyl-tRNA, thus increasing their reactivity as acceptors for peptidyl transferase.</text>
</comment>
<comment type="pathway">
    <text evidence="1">Protein biosynthesis; polypeptide chain elongation.</text>
</comment>
<comment type="subcellular location">
    <subcellularLocation>
        <location evidence="1">Cytoplasm</location>
    </subcellularLocation>
</comment>
<comment type="similarity">
    <text evidence="1">Belongs to the elongation factor P family.</text>
</comment>
<reference key="1">
    <citation type="journal article" date="2003" name="Science">
        <title>Genome of Geobacter sulfurreducens: metal reduction in subsurface environments.</title>
        <authorList>
            <person name="Methe B.A."/>
            <person name="Nelson K.E."/>
            <person name="Eisen J.A."/>
            <person name="Paulsen I.T."/>
            <person name="Nelson W.C."/>
            <person name="Heidelberg J.F."/>
            <person name="Wu D."/>
            <person name="Wu M."/>
            <person name="Ward N.L."/>
            <person name="Beanan M.J."/>
            <person name="Dodson R.J."/>
            <person name="Madupu R."/>
            <person name="Brinkac L.M."/>
            <person name="Daugherty S.C."/>
            <person name="DeBoy R.T."/>
            <person name="Durkin A.S."/>
            <person name="Gwinn M.L."/>
            <person name="Kolonay J.F."/>
            <person name="Sullivan S.A."/>
            <person name="Haft D.H."/>
            <person name="Selengut J."/>
            <person name="Davidsen T.M."/>
            <person name="Zafar N."/>
            <person name="White O."/>
            <person name="Tran B."/>
            <person name="Romero C."/>
            <person name="Forberger H.A."/>
            <person name="Weidman J.F."/>
            <person name="Khouri H.M."/>
            <person name="Feldblyum T.V."/>
            <person name="Utterback T.R."/>
            <person name="Van Aken S.E."/>
            <person name="Lovley D.R."/>
            <person name="Fraser C.M."/>
        </authorList>
    </citation>
    <scope>NUCLEOTIDE SEQUENCE [LARGE SCALE GENOMIC DNA]</scope>
    <source>
        <strain>ATCC 51573 / DSM 12127 / PCA</strain>
    </source>
</reference>
<protein>
    <recommendedName>
        <fullName evidence="1">Elongation factor P 2</fullName>
        <shortName evidence="1">EF-P 2</shortName>
    </recommendedName>
</protein>
<evidence type="ECO:0000255" key="1">
    <source>
        <dbReference type="HAMAP-Rule" id="MF_00141"/>
    </source>
</evidence>
<sequence>MYTVADLKKGLKLTLDGAPYLVIAFEFSKPGKGQALYRTKMRNMITGVILDRTYRSGETFEPARLEERRMQYLYKEDTHYTFMDNQTFEQVQMDEDAVGDAKNFLIDNLEVDILLFGEKAIGVTLPNFVNLRVVQTDPWVKGDTSGSDSKPATVETGYILRVPPFIEEGEMIVIDTRSGEYSTRVKG</sequence>
<gene>
    <name evidence="1" type="primary">efp2</name>
    <name type="synonym">efp-2</name>
    <name type="ordered locus">GSU1752</name>
</gene>
<accession>Q74CC2</accession>
<proteinExistence type="inferred from homology"/>
<feature type="chain" id="PRO_0000094254" description="Elongation factor P 2">
    <location>
        <begin position="1"/>
        <end position="187"/>
    </location>
</feature>
<keyword id="KW-0963">Cytoplasm</keyword>
<keyword id="KW-0251">Elongation factor</keyword>
<keyword id="KW-0648">Protein biosynthesis</keyword>
<keyword id="KW-1185">Reference proteome</keyword>
<dbReference type="EMBL" id="AE017180">
    <property type="protein sequence ID" value="AAR35129.1"/>
    <property type="molecule type" value="Genomic_DNA"/>
</dbReference>
<dbReference type="RefSeq" id="NP_952802.1">
    <property type="nucleotide sequence ID" value="NC_002939.5"/>
</dbReference>
<dbReference type="SMR" id="Q74CC2"/>
<dbReference type="FunCoup" id="Q74CC2">
    <property type="interactions" value="578"/>
</dbReference>
<dbReference type="STRING" id="243231.GSU1752"/>
<dbReference type="EnsemblBacteria" id="AAR35129">
    <property type="protein sequence ID" value="AAR35129"/>
    <property type="gene ID" value="GSU1752"/>
</dbReference>
<dbReference type="KEGG" id="gsu:GSU1752"/>
<dbReference type="PATRIC" id="fig|243231.5.peg.1792"/>
<dbReference type="eggNOG" id="COG0231">
    <property type="taxonomic scope" value="Bacteria"/>
</dbReference>
<dbReference type="HOGENOM" id="CLU_074944_0_0_7"/>
<dbReference type="InParanoid" id="Q74CC2"/>
<dbReference type="OrthoDB" id="9801844at2"/>
<dbReference type="UniPathway" id="UPA00345"/>
<dbReference type="Proteomes" id="UP000000577">
    <property type="component" value="Chromosome"/>
</dbReference>
<dbReference type="GO" id="GO:0005737">
    <property type="term" value="C:cytoplasm"/>
    <property type="evidence" value="ECO:0000318"/>
    <property type="project" value="GO_Central"/>
</dbReference>
<dbReference type="GO" id="GO:0003746">
    <property type="term" value="F:translation elongation factor activity"/>
    <property type="evidence" value="ECO:0000318"/>
    <property type="project" value="GO_Central"/>
</dbReference>
<dbReference type="GO" id="GO:0043043">
    <property type="term" value="P:peptide biosynthetic process"/>
    <property type="evidence" value="ECO:0007669"/>
    <property type="project" value="InterPro"/>
</dbReference>
<dbReference type="CDD" id="cd04470">
    <property type="entry name" value="S1_EF-P_repeat_1"/>
    <property type="match status" value="1"/>
</dbReference>
<dbReference type="CDD" id="cd05794">
    <property type="entry name" value="S1_EF-P_repeat_2"/>
    <property type="match status" value="1"/>
</dbReference>
<dbReference type="FunFam" id="2.30.30.30:FF:000003">
    <property type="entry name" value="Elongation factor P"/>
    <property type="match status" value="1"/>
</dbReference>
<dbReference type="FunFam" id="2.40.50.140:FF:000004">
    <property type="entry name" value="Elongation factor P"/>
    <property type="match status" value="1"/>
</dbReference>
<dbReference type="FunFam" id="2.40.50.140:FF:000009">
    <property type="entry name" value="Elongation factor P"/>
    <property type="match status" value="1"/>
</dbReference>
<dbReference type="Gene3D" id="2.30.30.30">
    <property type="match status" value="1"/>
</dbReference>
<dbReference type="Gene3D" id="2.40.50.140">
    <property type="entry name" value="Nucleic acid-binding proteins"/>
    <property type="match status" value="2"/>
</dbReference>
<dbReference type="HAMAP" id="MF_00141">
    <property type="entry name" value="EF_P"/>
    <property type="match status" value="1"/>
</dbReference>
<dbReference type="InterPro" id="IPR015365">
    <property type="entry name" value="Elong-fact-P_C"/>
</dbReference>
<dbReference type="InterPro" id="IPR012340">
    <property type="entry name" value="NA-bd_OB-fold"/>
</dbReference>
<dbReference type="InterPro" id="IPR014722">
    <property type="entry name" value="Rib_uL2_dom2"/>
</dbReference>
<dbReference type="InterPro" id="IPR020599">
    <property type="entry name" value="Transl_elong_fac_P/YeiP"/>
</dbReference>
<dbReference type="InterPro" id="IPR013185">
    <property type="entry name" value="Transl_elong_KOW-like"/>
</dbReference>
<dbReference type="InterPro" id="IPR001059">
    <property type="entry name" value="Transl_elong_P/YeiP_cen"/>
</dbReference>
<dbReference type="InterPro" id="IPR013852">
    <property type="entry name" value="Transl_elong_P/YeiP_CS"/>
</dbReference>
<dbReference type="InterPro" id="IPR011768">
    <property type="entry name" value="Transl_elongation_fac_P"/>
</dbReference>
<dbReference type="InterPro" id="IPR008991">
    <property type="entry name" value="Translation_prot_SH3-like_sf"/>
</dbReference>
<dbReference type="NCBIfam" id="TIGR00038">
    <property type="entry name" value="efp"/>
    <property type="match status" value="1"/>
</dbReference>
<dbReference type="NCBIfam" id="NF001810">
    <property type="entry name" value="PRK00529.1"/>
    <property type="match status" value="1"/>
</dbReference>
<dbReference type="PANTHER" id="PTHR30053">
    <property type="entry name" value="ELONGATION FACTOR P"/>
    <property type="match status" value="1"/>
</dbReference>
<dbReference type="PANTHER" id="PTHR30053:SF12">
    <property type="entry name" value="ELONGATION FACTOR P (EF-P) FAMILY PROTEIN"/>
    <property type="match status" value="1"/>
</dbReference>
<dbReference type="Pfam" id="PF01132">
    <property type="entry name" value="EFP"/>
    <property type="match status" value="1"/>
</dbReference>
<dbReference type="Pfam" id="PF08207">
    <property type="entry name" value="EFP_N"/>
    <property type="match status" value="1"/>
</dbReference>
<dbReference type="Pfam" id="PF09285">
    <property type="entry name" value="Elong-fact-P_C"/>
    <property type="match status" value="1"/>
</dbReference>
<dbReference type="PIRSF" id="PIRSF005901">
    <property type="entry name" value="EF-P"/>
    <property type="match status" value="1"/>
</dbReference>
<dbReference type="SMART" id="SM01185">
    <property type="entry name" value="EFP"/>
    <property type="match status" value="1"/>
</dbReference>
<dbReference type="SMART" id="SM00841">
    <property type="entry name" value="Elong-fact-P_C"/>
    <property type="match status" value="1"/>
</dbReference>
<dbReference type="SUPFAM" id="SSF50249">
    <property type="entry name" value="Nucleic acid-binding proteins"/>
    <property type="match status" value="2"/>
</dbReference>
<dbReference type="SUPFAM" id="SSF50104">
    <property type="entry name" value="Translation proteins SH3-like domain"/>
    <property type="match status" value="1"/>
</dbReference>
<dbReference type="PROSITE" id="PS01275">
    <property type="entry name" value="EFP"/>
    <property type="match status" value="1"/>
</dbReference>
<name>EFP2_GEOSL</name>